<proteinExistence type="inferred from homology"/>
<keyword id="KW-0997">Cell inner membrane</keyword>
<keyword id="KW-1003">Cell membrane</keyword>
<keyword id="KW-0472">Membrane</keyword>
<keyword id="KW-0812">Transmembrane</keyword>
<keyword id="KW-1133">Transmembrane helix</keyword>
<gene>
    <name evidence="1" type="primary">yciB</name>
    <name type="ordered locus">ECED1_1408</name>
</gene>
<comment type="function">
    <text evidence="1">Plays a role in cell envelope biogenesis, maintenance of cell envelope integrity and membrane homeostasis.</text>
</comment>
<comment type="subcellular location">
    <subcellularLocation>
        <location evidence="1">Cell inner membrane</location>
        <topology evidence="1">Multi-pass membrane protein</topology>
    </subcellularLocation>
</comment>
<comment type="similarity">
    <text evidence="1">Belongs to the YciB family.</text>
</comment>
<feature type="chain" id="PRO_1000124255" description="Inner membrane-spanning protein YciB">
    <location>
        <begin position="1"/>
        <end position="179"/>
    </location>
</feature>
<feature type="transmembrane region" description="Helical" evidence="1">
    <location>
        <begin position="22"/>
        <end position="42"/>
    </location>
</feature>
<feature type="transmembrane region" description="Helical" evidence="1">
    <location>
        <begin position="50"/>
        <end position="70"/>
    </location>
</feature>
<feature type="transmembrane region" description="Helical" evidence="1">
    <location>
        <begin position="76"/>
        <end position="96"/>
    </location>
</feature>
<feature type="transmembrane region" description="Helical" evidence="1">
    <location>
        <begin position="121"/>
        <end position="141"/>
    </location>
</feature>
<feature type="transmembrane region" description="Helical" evidence="1">
    <location>
        <begin position="149"/>
        <end position="169"/>
    </location>
</feature>
<dbReference type="EMBL" id="CU928162">
    <property type="protein sequence ID" value="CAR07607.1"/>
    <property type="molecule type" value="Genomic_DNA"/>
</dbReference>
<dbReference type="RefSeq" id="WP_000808672.1">
    <property type="nucleotide sequence ID" value="NC_011745.1"/>
</dbReference>
<dbReference type="KEGG" id="ecq:ECED1_1408"/>
<dbReference type="HOGENOM" id="CLU_089554_2_0_6"/>
<dbReference type="Proteomes" id="UP000000748">
    <property type="component" value="Chromosome"/>
</dbReference>
<dbReference type="GO" id="GO:0005886">
    <property type="term" value="C:plasma membrane"/>
    <property type="evidence" value="ECO:0007669"/>
    <property type="project" value="UniProtKB-SubCell"/>
</dbReference>
<dbReference type="HAMAP" id="MF_00189">
    <property type="entry name" value="YciB"/>
    <property type="match status" value="1"/>
</dbReference>
<dbReference type="InterPro" id="IPR006008">
    <property type="entry name" value="YciB"/>
</dbReference>
<dbReference type="NCBIfam" id="TIGR00997">
    <property type="entry name" value="ispZ"/>
    <property type="match status" value="1"/>
</dbReference>
<dbReference type="NCBIfam" id="NF001324">
    <property type="entry name" value="PRK00259.1-2"/>
    <property type="match status" value="1"/>
</dbReference>
<dbReference type="NCBIfam" id="NF001325">
    <property type="entry name" value="PRK00259.1-3"/>
    <property type="match status" value="1"/>
</dbReference>
<dbReference type="NCBIfam" id="NF001326">
    <property type="entry name" value="PRK00259.1-4"/>
    <property type="match status" value="1"/>
</dbReference>
<dbReference type="PANTHER" id="PTHR36917:SF1">
    <property type="entry name" value="INNER MEMBRANE-SPANNING PROTEIN YCIB"/>
    <property type="match status" value="1"/>
</dbReference>
<dbReference type="PANTHER" id="PTHR36917">
    <property type="entry name" value="INTRACELLULAR SEPTATION PROTEIN A-RELATED"/>
    <property type="match status" value="1"/>
</dbReference>
<dbReference type="Pfam" id="PF04279">
    <property type="entry name" value="IspA"/>
    <property type="match status" value="1"/>
</dbReference>
<evidence type="ECO:0000255" key="1">
    <source>
        <dbReference type="HAMAP-Rule" id="MF_00189"/>
    </source>
</evidence>
<accession>B7MU42</accession>
<organism>
    <name type="scientific">Escherichia coli O81 (strain ED1a)</name>
    <dbReference type="NCBI Taxonomy" id="585397"/>
    <lineage>
        <taxon>Bacteria</taxon>
        <taxon>Pseudomonadati</taxon>
        <taxon>Pseudomonadota</taxon>
        <taxon>Gammaproteobacteria</taxon>
        <taxon>Enterobacterales</taxon>
        <taxon>Enterobacteriaceae</taxon>
        <taxon>Escherichia</taxon>
    </lineage>
</organism>
<name>YCIB_ECO81</name>
<reference key="1">
    <citation type="journal article" date="2009" name="PLoS Genet.">
        <title>Organised genome dynamics in the Escherichia coli species results in highly diverse adaptive paths.</title>
        <authorList>
            <person name="Touchon M."/>
            <person name="Hoede C."/>
            <person name="Tenaillon O."/>
            <person name="Barbe V."/>
            <person name="Baeriswyl S."/>
            <person name="Bidet P."/>
            <person name="Bingen E."/>
            <person name="Bonacorsi S."/>
            <person name="Bouchier C."/>
            <person name="Bouvet O."/>
            <person name="Calteau A."/>
            <person name="Chiapello H."/>
            <person name="Clermont O."/>
            <person name="Cruveiller S."/>
            <person name="Danchin A."/>
            <person name="Diard M."/>
            <person name="Dossat C."/>
            <person name="Karoui M.E."/>
            <person name="Frapy E."/>
            <person name="Garry L."/>
            <person name="Ghigo J.M."/>
            <person name="Gilles A.M."/>
            <person name="Johnson J."/>
            <person name="Le Bouguenec C."/>
            <person name="Lescat M."/>
            <person name="Mangenot S."/>
            <person name="Martinez-Jehanne V."/>
            <person name="Matic I."/>
            <person name="Nassif X."/>
            <person name="Oztas S."/>
            <person name="Petit M.A."/>
            <person name="Pichon C."/>
            <person name="Rouy Z."/>
            <person name="Ruf C.S."/>
            <person name="Schneider D."/>
            <person name="Tourret J."/>
            <person name="Vacherie B."/>
            <person name="Vallenet D."/>
            <person name="Medigue C."/>
            <person name="Rocha E.P.C."/>
            <person name="Denamur E."/>
        </authorList>
    </citation>
    <scope>NUCLEOTIDE SEQUENCE [LARGE SCALE GENOMIC DNA]</scope>
    <source>
        <strain>ED1a</strain>
    </source>
</reference>
<protein>
    <recommendedName>
        <fullName evidence="1">Inner membrane-spanning protein YciB</fullName>
    </recommendedName>
</protein>
<sequence length="179" mass="20780">MKQFLDFLPLVVFFAFYKIYDIYAATAALIVATAIVLIYSWVRFRKVEKMALITFVLVVVFGGLTLFFHNDEFIKWKVTVIYALFAGALLVSQWVMKKPLIQRMLGKELTLPQSVWSKLNLAWAVFFILCGLANIYIAFWLPQNIWVNFKVFGLTALTLIFTLLSGIYIYRHMPQEDKS</sequence>